<gene>
    <name type="primary">glnP</name>
    <name type="ordered locus">SF0761</name>
    <name type="ordered locus">S0803</name>
</gene>
<feature type="chain" id="PRO_0000060033" description="Glutamine transport system permease protein GlnP">
    <location>
        <begin position="1"/>
        <end position="219"/>
    </location>
</feature>
<feature type="topological domain" description="Periplasmic" evidence="2">
    <location>
        <begin position="1"/>
        <end position="22"/>
    </location>
</feature>
<feature type="transmembrane region" description="Helical" evidence="3">
    <location>
        <begin position="23"/>
        <end position="43"/>
    </location>
</feature>
<feature type="topological domain" description="Cytoplasmic" evidence="2">
    <location>
        <begin position="44"/>
        <end position="53"/>
    </location>
</feature>
<feature type="transmembrane region" description="Helical" evidence="3">
    <location>
        <begin position="54"/>
        <end position="74"/>
    </location>
</feature>
<feature type="topological domain" description="Periplasmic" evidence="2">
    <location>
        <begin position="75"/>
        <end position="88"/>
    </location>
</feature>
<feature type="transmembrane region" description="Helical" evidence="3">
    <location>
        <begin position="89"/>
        <end position="109"/>
    </location>
</feature>
<feature type="topological domain" description="Cytoplasmic" evidence="2">
    <location>
        <begin position="110"/>
        <end position="150"/>
    </location>
</feature>
<feature type="transmembrane region" description="Helical" evidence="3">
    <location>
        <begin position="151"/>
        <end position="171"/>
    </location>
</feature>
<feature type="topological domain" description="Periplasmic" evidence="2">
    <location>
        <begin position="172"/>
        <end position="187"/>
    </location>
</feature>
<feature type="transmembrane region" description="Helical" evidence="3">
    <location>
        <begin position="188"/>
        <end position="208"/>
    </location>
</feature>
<feature type="topological domain" description="Cytoplasmic" evidence="2">
    <location>
        <begin position="209"/>
        <end position="219"/>
    </location>
</feature>
<feature type="domain" description="ABC transmembrane type-1" evidence="3">
    <location>
        <begin position="19"/>
        <end position="209"/>
    </location>
</feature>
<sequence length="219" mass="24364">MQFDWSAIWPAIPLLIEGAKMTLWISVLGLAGGLVIGLLAGFARTFGGWIANHVALVFIEVIRGTPIVVQVMFIYFALPMAFNDLRIDPFTAAVVTIMINSGAYIAEITRGAVLSIHKGFREAGLALGLSRWETIRYVILPLALRRMLPPLGNQWIISIKDTSLFIVIGVAELTRQGQEIIAGNFRALEIWSAVAVFYLIITLVLSFILRRLERRMKIL</sequence>
<comment type="function">
    <text evidence="1">Part of the binding-protein-dependent transport system for glutamine; probably responsible for the translocation of the substrate across the membrane.</text>
</comment>
<comment type="subcellular location">
    <subcellularLocation>
        <location evidence="1">Cell inner membrane</location>
        <topology evidence="3">Multi-pass membrane protein</topology>
    </subcellularLocation>
</comment>
<comment type="induction">
    <text evidence="1">By lack of glutamine.</text>
</comment>
<comment type="similarity">
    <text evidence="4">Belongs to the binding-protein-dependent transport system permease family. HisMQ subfamily.</text>
</comment>
<organism>
    <name type="scientific">Shigella flexneri</name>
    <dbReference type="NCBI Taxonomy" id="623"/>
    <lineage>
        <taxon>Bacteria</taxon>
        <taxon>Pseudomonadati</taxon>
        <taxon>Pseudomonadota</taxon>
        <taxon>Gammaproteobacteria</taxon>
        <taxon>Enterobacterales</taxon>
        <taxon>Enterobacteriaceae</taxon>
        <taxon>Shigella</taxon>
    </lineage>
</organism>
<name>GLNP_SHIFL</name>
<proteinExistence type="inferred from homology"/>
<dbReference type="EMBL" id="AE005674">
    <property type="protein sequence ID" value="AAN42395.1"/>
    <property type="molecule type" value="Genomic_DNA"/>
</dbReference>
<dbReference type="EMBL" id="AE014073">
    <property type="protein sequence ID" value="AAP16271.1"/>
    <property type="molecule type" value="Genomic_DNA"/>
</dbReference>
<dbReference type="RefSeq" id="NP_706688.1">
    <property type="nucleotide sequence ID" value="NC_004337.2"/>
</dbReference>
<dbReference type="RefSeq" id="WP_001159065.1">
    <property type="nucleotide sequence ID" value="NZ_WPGW01000128.1"/>
</dbReference>
<dbReference type="SMR" id="P0AEQ9"/>
<dbReference type="STRING" id="198214.SF0761"/>
<dbReference type="PaxDb" id="198214-SF0761"/>
<dbReference type="GeneID" id="1023707"/>
<dbReference type="GeneID" id="93776618"/>
<dbReference type="KEGG" id="sfl:SF0761"/>
<dbReference type="KEGG" id="sfx:S0803"/>
<dbReference type="PATRIC" id="fig|198214.7.peg.885"/>
<dbReference type="HOGENOM" id="CLU_019602_1_0_6"/>
<dbReference type="Proteomes" id="UP000001006">
    <property type="component" value="Chromosome"/>
</dbReference>
<dbReference type="Proteomes" id="UP000002673">
    <property type="component" value="Chromosome"/>
</dbReference>
<dbReference type="GO" id="GO:0043190">
    <property type="term" value="C:ATP-binding cassette (ABC) transporter complex"/>
    <property type="evidence" value="ECO:0007669"/>
    <property type="project" value="InterPro"/>
</dbReference>
<dbReference type="GO" id="GO:0022857">
    <property type="term" value="F:transmembrane transporter activity"/>
    <property type="evidence" value="ECO:0007669"/>
    <property type="project" value="InterPro"/>
</dbReference>
<dbReference type="GO" id="GO:0006865">
    <property type="term" value="P:amino acid transport"/>
    <property type="evidence" value="ECO:0007669"/>
    <property type="project" value="UniProtKB-KW"/>
</dbReference>
<dbReference type="CDD" id="cd06261">
    <property type="entry name" value="TM_PBP2"/>
    <property type="match status" value="1"/>
</dbReference>
<dbReference type="FunFam" id="1.10.3720.10:FF:000011">
    <property type="entry name" value="Glutamine ABC transporter permease GlnP"/>
    <property type="match status" value="1"/>
</dbReference>
<dbReference type="Gene3D" id="1.10.3720.10">
    <property type="entry name" value="MetI-like"/>
    <property type="match status" value="1"/>
</dbReference>
<dbReference type="InterPro" id="IPR010065">
    <property type="entry name" value="AA_ABC_transptr_permease_3TM"/>
</dbReference>
<dbReference type="InterPro" id="IPR043429">
    <property type="entry name" value="ArtM/GltK/GlnP/TcyL/YhdX-like"/>
</dbReference>
<dbReference type="InterPro" id="IPR000515">
    <property type="entry name" value="MetI-like"/>
</dbReference>
<dbReference type="InterPro" id="IPR035906">
    <property type="entry name" value="MetI-like_sf"/>
</dbReference>
<dbReference type="NCBIfam" id="TIGR01726">
    <property type="entry name" value="HEQRo_perm_3TM"/>
    <property type="match status" value="1"/>
</dbReference>
<dbReference type="NCBIfam" id="NF007028">
    <property type="entry name" value="PRK09494.1"/>
    <property type="match status" value="1"/>
</dbReference>
<dbReference type="PANTHER" id="PTHR30614:SF20">
    <property type="entry name" value="GLUTAMINE TRANSPORT SYSTEM PERMEASE PROTEIN GLNP"/>
    <property type="match status" value="1"/>
</dbReference>
<dbReference type="PANTHER" id="PTHR30614">
    <property type="entry name" value="MEMBRANE COMPONENT OF AMINO ACID ABC TRANSPORTER"/>
    <property type="match status" value="1"/>
</dbReference>
<dbReference type="Pfam" id="PF00528">
    <property type="entry name" value="BPD_transp_1"/>
    <property type="match status" value="1"/>
</dbReference>
<dbReference type="SUPFAM" id="SSF161098">
    <property type="entry name" value="MetI-like"/>
    <property type="match status" value="1"/>
</dbReference>
<dbReference type="PROSITE" id="PS50928">
    <property type="entry name" value="ABC_TM1"/>
    <property type="match status" value="1"/>
</dbReference>
<evidence type="ECO:0000250" key="1"/>
<evidence type="ECO:0000255" key="2"/>
<evidence type="ECO:0000255" key="3">
    <source>
        <dbReference type="PROSITE-ProRule" id="PRU00441"/>
    </source>
</evidence>
<evidence type="ECO:0000305" key="4"/>
<protein>
    <recommendedName>
        <fullName>Glutamine transport system permease protein GlnP</fullName>
    </recommendedName>
</protein>
<accession>P0AEQ9</accession>
<accession>P10345</accession>
<accession>P76825</accession>
<keyword id="KW-0029">Amino-acid transport</keyword>
<keyword id="KW-0997">Cell inner membrane</keyword>
<keyword id="KW-1003">Cell membrane</keyword>
<keyword id="KW-0472">Membrane</keyword>
<keyword id="KW-1185">Reference proteome</keyword>
<keyword id="KW-0812">Transmembrane</keyword>
<keyword id="KW-1133">Transmembrane helix</keyword>
<keyword id="KW-0813">Transport</keyword>
<reference key="1">
    <citation type="journal article" date="2002" name="Nucleic Acids Res.">
        <title>Genome sequence of Shigella flexneri 2a: insights into pathogenicity through comparison with genomes of Escherichia coli K12 and O157.</title>
        <authorList>
            <person name="Jin Q."/>
            <person name="Yuan Z."/>
            <person name="Xu J."/>
            <person name="Wang Y."/>
            <person name="Shen Y."/>
            <person name="Lu W."/>
            <person name="Wang J."/>
            <person name="Liu H."/>
            <person name="Yang J."/>
            <person name="Yang F."/>
            <person name="Zhang X."/>
            <person name="Zhang J."/>
            <person name="Yang G."/>
            <person name="Wu H."/>
            <person name="Qu D."/>
            <person name="Dong J."/>
            <person name="Sun L."/>
            <person name="Xue Y."/>
            <person name="Zhao A."/>
            <person name="Gao Y."/>
            <person name="Zhu J."/>
            <person name="Kan B."/>
            <person name="Ding K."/>
            <person name="Chen S."/>
            <person name="Cheng H."/>
            <person name="Yao Z."/>
            <person name="He B."/>
            <person name="Chen R."/>
            <person name="Ma D."/>
            <person name="Qiang B."/>
            <person name="Wen Y."/>
            <person name="Hou Y."/>
            <person name="Yu J."/>
        </authorList>
    </citation>
    <scope>NUCLEOTIDE SEQUENCE [LARGE SCALE GENOMIC DNA]</scope>
    <source>
        <strain>301 / Serotype 2a</strain>
    </source>
</reference>
<reference key="2">
    <citation type="journal article" date="2003" name="Infect. Immun.">
        <title>Complete genome sequence and comparative genomics of Shigella flexneri serotype 2a strain 2457T.</title>
        <authorList>
            <person name="Wei J."/>
            <person name="Goldberg M.B."/>
            <person name="Burland V."/>
            <person name="Venkatesan M.M."/>
            <person name="Deng W."/>
            <person name="Fournier G."/>
            <person name="Mayhew G.F."/>
            <person name="Plunkett G. III"/>
            <person name="Rose D.J."/>
            <person name="Darling A."/>
            <person name="Mau B."/>
            <person name="Perna N.T."/>
            <person name="Payne S.M."/>
            <person name="Runyen-Janecky L.J."/>
            <person name="Zhou S."/>
            <person name="Schwartz D.C."/>
            <person name="Blattner F.R."/>
        </authorList>
    </citation>
    <scope>NUCLEOTIDE SEQUENCE [LARGE SCALE GENOMIC DNA]</scope>
    <source>
        <strain>ATCC 700930 / 2457T / Serotype 2a</strain>
    </source>
</reference>